<comment type="function">
    <text>Decarboxylates branched-chain and aromatic alpha-keto acids to aldehydes.</text>
</comment>
<comment type="cofactor">
    <cofactor evidence="1">
        <name>a metal cation</name>
        <dbReference type="ChEBI" id="CHEBI:25213"/>
    </cofactor>
    <text evidence="1">Binds 1 metal ion per subunit.</text>
</comment>
<comment type="cofactor">
    <cofactor evidence="1">
        <name>thiamine diphosphate</name>
        <dbReference type="ChEBI" id="CHEBI:58937"/>
    </cofactor>
    <text evidence="1">Binds 1 thiamine pyrophosphate per subunit.</text>
</comment>
<comment type="similarity">
    <text evidence="3">Belongs to the TPP enzyme family.</text>
</comment>
<comment type="sequence caution" evidence="3">
    <conflict type="erroneous initiation">
        <sequence resource="EMBL-CDS" id="ABK66465"/>
    </conflict>
</comment>
<organism>
    <name type="scientific">Mycobacterium avium (strain 104)</name>
    <dbReference type="NCBI Taxonomy" id="243243"/>
    <lineage>
        <taxon>Bacteria</taxon>
        <taxon>Bacillati</taxon>
        <taxon>Actinomycetota</taxon>
        <taxon>Actinomycetes</taxon>
        <taxon>Mycobacteriales</taxon>
        <taxon>Mycobacteriaceae</taxon>
        <taxon>Mycobacterium</taxon>
        <taxon>Mycobacterium avium complex (MAC)</taxon>
    </lineage>
</organism>
<keyword id="KW-0210">Decarboxylase</keyword>
<keyword id="KW-0456">Lyase</keyword>
<keyword id="KW-0460">Magnesium</keyword>
<keyword id="KW-0479">Metal-binding</keyword>
<keyword id="KW-0786">Thiamine pyrophosphate</keyword>
<feature type="chain" id="PRO_0000333745" description="Alpha-keto-acid decarboxylase">
    <location>
        <begin position="1"/>
        <end position="563"/>
    </location>
</feature>
<feature type="region of interest" description="Disordered" evidence="2">
    <location>
        <begin position="348"/>
        <end position="367"/>
    </location>
</feature>
<feature type="region of interest" description="Thiamine pyrophosphate binding" evidence="1">
    <location>
        <begin position="394"/>
        <end position="476"/>
    </location>
</feature>
<feature type="compositionally biased region" description="Pro residues" evidence="2">
    <location>
        <begin position="351"/>
        <end position="366"/>
    </location>
</feature>
<feature type="binding site" evidence="1">
    <location>
        <position position="59"/>
    </location>
    <ligand>
        <name>thiamine diphosphate</name>
        <dbReference type="ChEBI" id="CHEBI:58937"/>
    </ligand>
</feature>
<feature type="binding site" evidence="1">
    <location>
        <position position="444"/>
    </location>
    <ligand>
        <name>Mg(2+)</name>
        <dbReference type="ChEBI" id="CHEBI:18420"/>
    </ligand>
</feature>
<feature type="binding site" evidence="1">
    <location>
        <position position="471"/>
    </location>
    <ligand>
        <name>Mg(2+)</name>
        <dbReference type="ChEBI" id="CHEBI:18420"/>
    </ligand>
</feature>
<feature type="binding site" evidence="1">
    <location>
        <position position="473"/>
    </location>
    <ligand>
        <name>Mg(2+)</name>
        <dbReference type="ChEBI" id="CHEBI:18420"/>
    </ligand>
</feature>
<proteinExistence type="inferred from homology"/>
<name>KDC_MYCA1</name>
<accession>A0QBE6</accession>
<dbReference type="EC" id="4.1.1.-"/>
<dbReference type="EMBL" id="CP000479">
    <property type="protein sequence ID" value="ABK66465.1"/>
    <property type="status" value="ALT_INIT"/>
    <property type="molecule type" value="Genomic_DNA"/>
</dbReference>
<dbReference type="SMR" id="A0QBE6"/>
<dbReference type="KEGG" id="mav:MAV_0973"/>
<dbReference type="HOGENOM" id="CLU_013748_0_2_11"/>
<dbReference type="Proteomes" id="UP000001574">
    <property type="component" value="Chromosome"/>
</dbReference>
<dbReference type="GO" id="GO:0005829">
    <property type="term" value="C:cytosol"/>
    <property type="evidence" value="ECO:0007669"/>
    <property type="project" value="TreeGrafter"/>
</dbReference>
<dbReference type="GO" id="GO:0000287">
    <property type="term" value="F:magnesium ion binding"/>
    <property type="evidence" value="ECO:0007669"/>
    <property type="project" value="InterPro"/>
</dbReference>
<dbReference type="GO" id="GO:0004737">
    <property type="term" value="F:pyruvate decarboxylase activity"/>
    <property type="evidence" value="ECO:0007669"/>
    <property type="project" value="TreeGrafter"/>
</dbReference>
<dbReference type="GO" id="GO:0030976">
    <property type="term" value="F:thiamine pyrophosphate binding"/>
    <property type="evidence" value="ECO:0007669"/>
    <property type="project" value="InterPro"/>
</dbReference>
<dbReference type="GO" id="GO:0000949">
    <property type="term" value="P:aromatic amino acid family catabolic process to alcohol via Ehrlich pathway"/>
    <property type="evidence" value="ECO:0007669"/>
    <property type="project" value="TreeGrafter"/>
</dbReference>
<dbReference type="CDD" id="cd02005">
    <property type="entry name" value="TPP_PDC_IPDC"/>
    <property type="match status" value="1"/>
</dbReference>
<dbReference type="CDD" id="cd07038">
    <property type="entry name" value="TPP_PYR_PDC_IPDC_like"/>
    <property type="match status" value="1"/>
</dbReference>
<dbReference type="FunFam" id="3.40.50.970:FF:000019">
    <property type="entry name" value="Pyruvate decarboxylase isozyme"/>
    <property type="match status" value="1"/>
</dbReference>
<dbReference type="FunFam" id="3.40.50.970:FF:000024">
    <property type="entry name" value="Pyruvate decarboxylase isozyme"/>
    <property type="match status" value="1"/>
</dbReference>
<dbReference type="Gene3D" id="3.40.50.970">
    <property type="match status" value="2"/>
</dbReference>
<dbReference type="Gene3D" id="3.40.50.1220">
    <property type="entry name" value="TPP-binding domain"/>
    <property type="match status" value="1"/>
</dbReference>
<dbReference type="InterPro" id="IPR029035">
    <property type="entry name" value="DHS-like_NAD/FAD-binding_dom"/>
</dbReference>
<dbReference type="InterPro" id="IPR012110">
    <property type="entry name" value="PDC/IPDC-like"/>
</dbReference>
<dbReference type="InterPro" id="IPR029061">
    <property type="entry name" value="THDP-binding"/>
</dbReference>
<dbReference type="InterPro" id="IPR012000">
    <property type="entry name" value="Thiamin_PyroP_enz_cen_dom"/>
</dbReference>
<dbReference type="InterPro" id="IPR012001">
    <property type="entry name" value="Thiamin_PyroP_enz_TPP-bd_dom"/>
</dbReference>
<dbReference type="InterPro" id="IPR000399">
    <property type="entry name" value="TPP-bd_CS"/>
</dbReference>
<dbReference type="InterPro" id="IPR011766">
    <property type="entry name" value="TPP_enzyme_TPP-bd"/>
</dbReference>
<dbReference type="InterPro" id="IPR047214">
    <property type="entry name" value="TPP_PDC_IPDC"/>
</dbReference>
<dbReference type="InterPro" id="IPR047213">
    <property type="entry name" value="TPP_PYR_PDC_IPDC-like"/>
</dbReference>
<dbReference type="PANTHER" id="PTHR43452">
    <property type="entry name" value="PYRUVATE DECARBOXYLASE"/>
    <property type="match status" value="1"/>
</dbReference>
<dbReference type="PANTHER" id="PTHR43452:SF30">
    <property type="entry name" value="PYRUVATE DECARBOXYLASE ISOZYME 1-RELATED"/>
    <property type="match status" value="1"/>
</dbReference>
<dbReference type="Pfam" id="PF02775">
    <property type="entry name" value="TPP_enzyme_C"/>
    <property type="match status" value="1"/>
</dbReference>
<dbReference type="Pfam" id="PF00205">
    <property type="entry name" value="TPP_enzyme_M"/>
    <property type="match status" value="1"/>
</dbReference>
<dbReference type="Pfam" id="PF02776">
    <property type="entry name" value="TPP_enzyme_N"/>
    <property type="match status" value="1"/>
</dbReference>
<dbReference type="PIRSF" id="PIRSF036565">
    <property type="entry name" value="Pyruvt_ip_decrb"/>
    <property type="match status" value="1"/>
</dbReference>
<dbReference type="SUPFAM" id="SSF52467">
    <property type="entry name" value="DHS-like NAD/FAD-binding domain"/>
    <property type="match status" value="1"/>
</dbReference>
<dbReference type="SUPFAM" id="SSF52518">
    <property type="entry name" value="Thiamin diphosphate-binding fold (THDP-binding)"/>
    <property type="match status" value="2"/>
</dbReference>
<dbReference type="PROSITE" id="PS00187">
    <property type="entry name" value="TPP_ENZYMES"/>
    <property type="match status" value="1"/>
</dbReference>
<protein>
    <recommendedName>
        <fullName>Alpha-keto-acid decarboxylase</fullName>
        <shortName>KDC</shortName>
        <ecNumber>4.1.1.-</ecNumber>
    </recommendedName>
</protein>
<evidence type="ECO:0000250" key="1"/>
<evidence type="ECO:0000256" key="2">
    <source>
        <dbReference type="SAM" id="MobiDB-lite"/>
    </source>
</evidence>
<evidence type="ECO:0000305" key="3"/>
<reference key="1">
    <citation type="submission" date="2006-10" db="EMBL/GenBank/DDBJ databases">
        <authorList>
            <person name="Fleischmann R.D."/>
            <person name="Dodson R.J."/>
            <person name="Haft D.H."/>
            <person name="Merkel J.S."/>
            <person name="Nelson W.C."/>
            <person name="Fraser C.M."/>
        </authorList>
    </citation>
    <scope>NUCLEOTIDE SEQUENCE [LARGE SCALE GENOMIC DNA]</scope>
    <source>
        <strain>104</strain>
    </source>
</reference>
<sequence length="563" mass="60389">MPVTDAATEPAYTVGDYLLDRLAELGVSEIFGVPGDYNLEFLDHIVAHPRLRWVGNANELNAGYAADGYGRLRGMSALVTTFGVGELSAANAVAGSYAEQVPVVHIVGGPSKDAQGTRRALHHSLGDGDFEHFFRVSREITCAQANLMPATARREIDRVLSEVREQKRPGYILLSTDVARFPTEPPEAALPRYTGGTSPRALAMFTEAAAALIGEHRITVLADLLVHRLQAIKELEALLAADVVPHATLMWGKSLLDESSPNFLGIYAGSASAPAVRTAIEEAPVLVTAGVVFTDMVSGFFSQRIDPARTIDVGQYQSSVAGEVFAPLEMGEALQALAAILTRRGVSSPPVASPPAEPLPPPPPREQPLTQKMVWDRVCTALTPGNVVLADQGTSFYGMADHRLPQGVTFIGQPLWGSIGYTLPAALGAAVAHPDRRTVLLIGDGAAQLTVQELGTFAREGLSPVIVVVNNDGYTVERAIHGETAPYNDIVGWKWTEVPNSLGVTDHLAFRVQTYGELDDALTAAARHQDRMVLVEVVLPRLEIPRLLVELVRPTSPDGSPRR</sequence>
<gene>
    <name type="primary">kdc</name>
    <name type="ordered locus">MAV_0973</name>
</gene>